<reference key="1">
    <citation type="journal article" date="2005" name="Nature">
        <title>The genome of the social amoeba Dictyostelium discoideum.</title>
        <authorList>
            <person name="Eichinger L."/>
            <person name="Pachebat J.A."/>
            <person name="Gloeckner G."/>
            <person name="Rajandream M.A."/>
            <person name="Sucgang R."/>
            <person name="Berriman M."/>
            <person name="Song J."/>
            <person name="Olsen R."/>
            <person name="Szafranski K."/>
            <person name="Xu Q."/>
            <person name="Tunggal B."/>
            <person name="Kummerfeld S."/>
            <person name="Madera M."/>
            <person name="Konfortov B.A."/>
            <person name="Rivero F."/>
            <person name="Bankier A.T."/>
            <person name="Lehmann R."/>
            <person name="Hamlin N."/>
            <person name="Davies R."/>
            <person name="Gaudet P."/>
            <person name="Fey P."/>
            <person name="Pilcher K."/>
            <person name="Chen G."/>
            <person name="Saunders D."/>
            <person name="Sodergren E.J."/>
            <person name="Davis P."/>
            <person name="Kerhornou A."/>
            <person name="Nie X."/>
            <person name="Hall N."/>
            <person name="Anjard C."/>
            <person name="Hemphill L."/>
            <person name="Bason N."/>
            <person name="Farbrother P."/>
            <person name="Desany B."/>
            <person name="Just E."/>
            <person name="Morio T."/>
            <person name="Rost R."/>
            <person name="Churcher C.M."/>
            <person name="Cooper J."/>
            <person name="Haydock S."/>
            <person name="van Driessche N."/>
            <person name="Cronin A."/>
            <person name="Goodhead I."/>
            <person name="Muzny D.M."/>
            <person name="Mourier T."/>
            <person name="Pain A."/>
            <person name="Lu M."/>
            <person name="Harper D."/>
            <person name="Lindsay R."/>
            <person name="Hauser H."/>
            <person name="James K.D."/>
            <person name="Quiles M."/>
            <person name="Madan Babu M."/>
            <person name="Saito T."/>
            <person name="Buchrieser C."/>
            <person name="Wardroper A."/>
            <person name="Felder M."/>
            <person name="Thangavelu M."/>
            <person name="Johnson D."/>
            <person name="Knights A."/>
            <person name="Loulseged H."/>
            <person name="Mungall K.L."/>
            <person name="Oliver K."/>
            <person name="Price C."/>
            <person name="Quail M.A."/>
            <person name="Urushihara H."/>
            <person name="Hernandez J."/>
            <person name="Rabbinowitsch E."/>
            <person name="Steffen D."/>
            <person name="Sanders M."/>
            <person name="Ma J."/>
            <person name="Kohara Y."/>
            <person name="Sharp S."/>
            <person name="Simmonds M.N."/>
            <person name="Spiegler S."/>
            <person name="Tivey A."/>
            <person name="Sugano S."/>
            <person name="White B."/>
            <person name="Walker D."/>
            <person name="Woodward J.R."/>
            <person name="Winckler T."/>
            <person name="Tanaka Y."/>
            <person name="Shaulsky G."/>
            <person name="Schleicher M."/>
            <person name="Weinstock G.M."/>
            <person name="Rosenthal A."/>
            <person name="Cox E.C."/>
            <person name="Chisholm R.L."/>
            <person name="Gibbs R.A."/>
            <person name="Loomis W.F."/>
            <person name="Platzer M."/>
            <person name="Kay R.R."/>
            <person name="Williams J.G."/>
            <person name="Dear P.H."/>
            <person name="Noegel A.A."/>
            <person name="Barrell B.G."/>
            <person name="Kuspa A."/>
        </authorList>
    </citation>
    <scope>NUCLEOTIDE SEQUENCE [LARGE SCALE GENOMIC DNA]</scope>
    <source>
        <strain>AX4</strain>
    </source>
</reference>
<reference key="2">
    <citation type="journal article" date="1994" name="Proc. Natl. Acad. Sci. U.S.A.">
        <title>Discovery of myosin genes by physical mapping in Dictyostelium.</title>
        <authorList>
            <person name="Titus M.A."/>
            <person name="Kuspa A."/>
            <person name="Loomis W.F."/>
        </authorList>
    </citation>
    <scope>NUCLEOTIDE SEQUENCE [GENOMIC DNA] OF 163-261</scope>
</reference>
<reference key="3">
    <citation type="journal article" date="2006" name="BMC Genomics">
        <title>Thirteen is enough: the myosins of Dictyostelium discoideum and their light chains.</title>
        <authorList>
            <person name="Kollmar M."/>
        </authorList>
    </citation>
    <scope>NOMENCLATURE</scope>
</reference>
<sequence>MMIDNNCGKEKVWVPNPEKGWINGDLIKEIPGEGWLVRDENGKEIKIEKDELRMQNPVIQEGIDDMTSLSHLHEAAVIHNLIKRYEINSIYTYTGSILIAINPYTKLPIYSKEMIESFCDQPVSKLAPHVYSIAESAYREMLNFQKNQSILVSGESGAGKTETTKFLLQYFAAMGEKGNGVNTSLISEEDIVEGNNIETQVIKSTPILEAFGNSKTLRNDNSSRFGKFIEIHFDKIKGTIVGAKLETYLLEKSRIVKPPENERGYHIFYQLIKGFNNSCCLKNSSNNNKDEDSSSSSNNNIDDLKSLLKCKASDFNYLISSGCDSIDGVDDSQVFIKTENALKVMGLSNDELIGIYKILLSILHIGNIEFEKGKEEDSSIIKYGNSSFGESFSDDDAGGYNPLEISCKLLGCSVDSLKSTFCSRKMKAGNESYTINHTVEQASQARDSLSMFLYSRLFDWLVVRINQSIDKIGTEKKDNSFLFIGILDIYGFESFESNSYEQFTINYANEKLQNQFNHQIFKLEQLEYEKEKIDWSYIEFSDNQECIDLIEKKPLGILSILDEESQFPKSTPSTLCTKLYNNHSKSKNFEKPRFSQTHFIIDHYAGKVEYDTNLFLEKNKDFIISEQVSALESSNWKFLTNLFQILSKKMNGGGGTSGGGGAGGNKASSSAAGKSTFKFTSVSSQFKESLNSLMTTINSTNPHYIRCIKPNTEKRANLFDNVMVLHQLRCSGVIEQLRISRSGYPSRLVYDNFIKRYKLIVAKDFKNDDDSNESKEWNSILKETDLNSSNGGTNNQIELKRKGAELMINKLSIDISSVQFGLTKLFFKSGIIANLELLRSQTMINSATFIQKIWRGYTDRKAYTSTKHSSIYFQSLIRSYLQQLEYNSMVEENSAIHLQSLIRTNELEKQFNQLLSTTIHFQSLLRRLEDSKEFNTLMDRIKKIVKIQSLWRSNLAKKQLKLLKAEAKSLTNVVAEKNKLASKLGDIQSKLDMESQLAQKIKNENEQLSSQFSNIQIEKEKLQKDFGNINLEKEELLLKYSALESEYHQYKQQNELIISKLKQHINDLEEKQHQHSYKNNEVVGNTSFEGSTTTNNGVTSPPKSSPASPIRNSINSNSDTTISGSSDDSIDNTDSLILSPKQHKGEDRKRNHEISSISPPRSRETIGHDDDDNNVDVIPRRQFNELEKEYKELKQMDETHKQYIESLKLQITQLEEKVKKSSSHPRSLLPGIPSNINDSPKVVYTKSSITNDNSSSHHQQQQQQHNISPSNSITSTTSPINMMDSNIKSLSYKDFTNSQEIDAQQQLHQYHLNNGTNPATSTTNGSGNPLSQSSPTGSDKHIQQSTISDLVSALNFNNCQLESGKYLVDLIIKNHDSIVSKYVPSEMGGIPEPAFILSRCFLKNIYDVDATVIGTPNSTNSGGGSGTGVLDPIETNVNILIYFCDKVEEVIYRDPKSNCSALCYWFSNFYTLFNIMETYNQDTKDQLSLNDQDKALIEKLKITLQTMIVKAHKNVVKNITDYIQPILHKSLNDTTSEIDFMDPITNYLNQIQISLSLENCYINNNLCKLLFEQLFSFINAMIFNEILLRKDLCCLRSSIPIKMNISELEHWVKLHHGKEWSSSVCDKLRLLKEVVYILMIDKTQLQNDELRDEICPTLSIAQLKQLLTMYSPDVDSFEDPIPLEILTSLMDSPKYNPDENILLDLSKIFTLKFINSNQTLSSSTSSENDLMATINLNALESVQYACDDLVSNIVKKNIEIVSLNNQKSIKK</sequence>
<dbReference type="EMBL" id="AAFI02000141">
    <property type="protein sequence ID" value="EDR41040.1"/>
    <property type="molecule type" value="Genomic_DNA"/>
</dbReference>
<dbReference type="EMBL" id="L35320">
    <property type="protein sequence ID" value="AAA61402.1"/>
    <property type="molecule type" value="Genomic_DNA"/>
</dbReference>
<dbReference type="RefSeq" id="XP_001733030.1">
    <property type="nucleotide sequence ID" value="XM_001732978.1"/>
</dbReference>
<dbReference type="SMR" id="P54696"/>
<dbReference type="FunCoup" id="P54696">
    <property type="interactions" value="88"/>
</dbReference>
<dbReference type="STRING" id="44689.P54696"/>
<dbReference type="PaxDb" id="44689-DDB0233685"/>
<dbReference type="EnsemblProtists" id="EDR41040">
    <property type="protein sequence ID" value="EDR41040"/>
    <property type="gene ID" value="DDB_G0289447"/>
</dbReference>
<dbReference type="GeneID" id="8627161"/>
<dbReference type="KEGG" id="ddi:DDB_G0289447"/>
<dbReference type="dictyBase" id="DDB_G0289447">
    <property type="gene designation" value="myoH"/>
</dbReference>
<dbReference type="VEuPathDB" id="AmoebaDB:DDB_G0289447"/>
<dbReference type="eggNOG" id="KOG0160">
    <property type="taxonomic scope" value="Eukaryota"/>
</dbReference>
<dbReference type="HOGENOM" id="CLU_000192_3_1_1"/>
<dbReference type="InParanoid" id="P54696"/>
<dbReference type="OMA" id="ISELEHW"/>
<dbReference type="PhylomeDB" id="P54696"/>
<dbReference type="Reactome" id="R-DDI-9013418">
    <property type="pathway name" value="RHOBTB2 GTPase cycle"/>
</dbReference>
<dbReference type="Reactome" id="R-DDI-9013419">
    <property type="pathway name" value="RHOT2 GTPase cycle"/>
</dbReference>
<dbReference type="Reactome" id="R-DDI-9013420">
    <property type="pathway name" value="RHOU GTPase cycle"/>
</dbReference>
<dbReference type="Reactome" id="R-DDI-9013422">
    <property type="pathway name" value="RHOBTB1 GTPase cycle"/>
</dbReference>
<dbReference type="Reactome" id="R-DDI-9013425">
    <property type="pathway name" value="RHOT1 GTPase cycle"/>
</dbReference>
<dbReference type="PRO" id="PR:P54696"/>
<dbReference type="Proteomes" id="UP000002195">
    <property type="component" value="Chromosome 5"/>
</dbReference>
<dbReference type="GO" id="GO:0015629">
    <property type="term" value="C:actin cytoskeleton"/>
    <property type="evidence" value="ECO:0000318"/>
    <property type="project" value="GO_Central"/>
</dbReference>
<dbReference type="GO" id="GO:0005737">
    <property type="term" value="C:cytoplasm"/>
    <property type="evidence" value="ECO:0000318"/>
    <property type="project" value="GO_Central"/>
</dbReference>
<dbReference type="GO" id="GO:0016020">
    <property type="term" value="C:membrane"/>
    <property type="evidence" value="ECO:0000318"/>
    <property type="project" value="GO_Central"/>
</dbReference>
<dbReference type="GO" id="GO:0016459">
    <property type="term" value="C:myosin complex"/>
    <property type="evidence" value="ECO:0007669"/>
    <property type="project" value="UniProtKB-KW"/>
</dbReference>
<dbReference type="GO" id="GO:0051015">
    <property type="term" value="F:actin filament binding"/>
    <property type="evidence" value="ECO:0000318"/>
    <property type="project" value="GO_Central"/>
</dbReference>
<dbReference type="GO" id="GO:0005524">
    <property type="term" value="F:ATP binding"/>
    <property type="evidence" value="ECO:0007669"/>
    <property type="project" value="UniProtKB-KW"/>
</dbReference>
<dbReference type="GO" id="GO:0005516">
    <property type="term" value="F:calmodulin binding"/>
    <property type="evidence" value="ECO:0007669"/>
    <property type="project" value="UniProtKB-KW"/>
</dbReference>
<dbReference type="GO" id="GO:0000146">
    <property type="term" value="F:microfilament motor activity"/>
    <property type="evidence" value="ECO:0000318"/>
    <property type="project" value="GO_Central"/>
</dbReference>
<dbReference type="GO" id="GO:0007015">
    <property type="term" value="P:actin filament organization"/>
    <property type="evidence" value="ECO:0000318"/>
    <property type="project" value="GO_Central"/>
</dbReference>
<dbReference type="GO" id="GO:0006897">
    <property type="term" value="P:endocytosis"/>
    <property type="evidence" value="ECO:0000318"/>
    <property type="project" value="GO_Central"/>
</dbReference>
<dbReference type="CDD" id="cd23767">
    <property type="entry name" value="IQCD"/>
    <property type="match status" value="1"/>
</dbReference>
<dbReference type="CDD" id="cd00124">
    <property type="entry name" value="MYSc"/>
    <property type="match status" value="1"/>
</dbReference>
<dbReference type="Gene3D" id="1.10.10.820">
    <property type="match status" value="1"/>
</dbReference>
<dbReference type="Gene3D" id="1.20.5.190">
    <property type="match status" value="1"/>
</dbReference>
<dbReference type="Gene3D" id="1.20.58.530">
    <property type="match status" value="1"/>
</dbReference>
<dbReference type="Gene3D" id="3.30.70.1590">
    <property type="match status" value="1"/>
</dbReference>
<dbReference type="Gene3D" id="3.40.850.10">
    <property type="entry name" value="Kinesin motor domain"/>
    <property type="match status" value="1"/>
</dbReference>
<dbReference type="Gene3D" id="1.20.120.720">
    <property type="entry name" value="Myosin VI head, motor domain, U50 subdomain"/>
    <property type="match status" value="1"/>
</dbReference>
<dbReference type="InterPro" id="IPR002710">
    <property type="entry name" value="Dilute_dom"/>
</dbReference>
<dbReference type="InterPro" id="IPR000048">
    <property type="entry name" value="IQ_motif_EF-hand-BS"/>
</dbReference>
<dbReference type="InterPro" id="IPR036961">
    <property type="entry name" value="Kinesin_motor_dom_sf"/>
</dbReference>
<dbReference type="InterPro" id="IPR001609">
    <property type="entry name" value="Myosin_head_motor_dom-like"/>
</dbReference>
<dbReference type="InterPro" id="IPR004009">
    <property type="entry name" value="Myosin_N"/>
</dbReference>
<dbReference type="InterPro" id="IPR027417">
    <property type="entry name" value="P-loop_NTPase"/>
</dbReference>
<dbReference type="PANTHER" id="PTHR13140:SF706">
    <property type="entry name" value="DILUTE CLASS UNCONVENTIONAL MYOSIN, ISOFORM C"/>
    <property type="match status" value="1"/>
</dbReference>
<dbReference type="PANTHER" id="PTHR13140">
    <property type="entry name" value="MYOSIN"/>
    <property type="match status" value="1"/>
</dbReference>
<dbReference type="Pfam" id="PF01843">
    <property type="entry name" value="DIL"/>
    <property type="match status" value="1"/>
</dbReference>
<dbReference type="Pfam" id="PF00612">
    <property type="entry name" value="IQ"/>
    <property type="match status" value="2"/>
</dbReference>
<dbReference type="Pfam" id="PF00063">
    <property type="entry name" value="Myosin_head"/>
    <property type="match status" value="1"/>
</dbReference>
<dbReference type="PRINTS" id="PR00193">
    <property type="entry name" value="MYOSINHEAVY"/>
</dbReference>
<dbReference type="SMART" id="SM01132">
    <property type="entry name" value="DIL"/>
    <property type="match status" value="1"/>
</dbReference>
<dbReference type="SMART" id="SM00015">
    <property type="entry name" value="IQ"/>
    <property type="match status" value="3"/>
</dbReference>
<dbReference type="SMART" id="SM00242">
    <property type="entry name" value="MYSc"/>
    <property type="match status" value="1"/>
</dbReference>
<dbReference type="SUPFAM" id="SSF52540">
    <property type="entry name" value="P-loop containing nucleoside triphosphate hydrolases"/>
    <property type="match status" value="2"/>
</dbReference>
<dbReference type="PROSITE" id="PS51126">
    <property type="entry name" value="DILUTE"/>
    <property type="match status" value="1"/>
</dbReference>
<dbReference type="PROSITE" id="PS50096">
    <property type="entry name" value="IQ"/>
    <property type="match status" value="2"/>
</dbReference>
<dbReference type="PROSITE" id="PS51456">
    <property type="entry name" value="MYOSIN_MOTOR"/>
    <property type="match status" value="1"/>
</dbReference>
<dbReference type="PROSITE" id="PS51844">
    <property type="entry name" value="SH3_LIKE"/>
    <property type="match status" value="1"/>
</dbReference>
<keyword id="KW-0009">Actin-binding</keyword>
<keyword id="KW-0067">ATP-binding</keyword>
<keyword id="KW-0112">Calmodulin-binding</keyword>
<keyword id="KW-0175">Coiled coil</keyword>
<keyword id="KW-0505">Motor protein</keyword>
<keyword id="KW-0518">Myosin</keyword>
<keyword id="KW-0547">Nucleotide-binding</keyword>
<keyword id="KW-1185">Reference proteome</keyword>
<keyword id="KW-0677">Repeat</keyword>
<evidence type="ECO:0000255" key="1"/>
<evidence type="ECO:0000255" key="2">
    <source>
        <dbReference type="PROSITE-ProRule" id="PRU00116"/>
    </source>
</evidence>
<evidence type="ECO:0000255" key="3">
    <source>
        <dbReference type="PROSITE-ProRule" id="PRU00503"/>
    </source>
</evidence>
<evidence type="ECO:0000255" key="4">
    <source>
        <dbReference type="PROSITE-ProRule" id="PRU00782"/>
    </source>
</evidence>
<evidence type="ECO:0000255" key="5">
    <source>
        <dbReference type="PROSITE-ProRule" id="PRU01190"/>
    </source>
</evidence>
<evidence type="ECO:0000256" key="6">
    <source>
        <dbReference type="SAM" id="MobiDB-lite"/>
    </source>
</evidence>
<evidence type="ECO:0000305" key="7"/>
<name>MYOH_DICDI</name>
<proteinExistence type="inferred from homology"/>
<protein>
    <recommendedName>
        <fullName>Myosin-H heavy chain</fullName>
    </recommendedName>
    <alternativeName>
        <fullName>Myosin-5a</fullName>
    </alternativeName>
</protein>
<gene>
    <name type="primary">myoH</name>
    <name type="synonym">myo5A</name>
    <name type="ORF">DDB_G0289447</name>
</gene>
<feature type="chain" id="PRO_0000123371" description="Myosin-H heavy chain">
    <location>
        <begin position="1"/>
        <end position="1771"/>
    </location>
</feature>
<feature type="domain" description="Myosin N-terminal SH3-like" evidence="5">
    <location>
        <begin position="7"/>
        <end position="57"/>
    </location>
</feature>
<feature type="domain" description="Myosin motor" evidence="4">
    <location>
        <begin position="61"/>
        <end position="840"/>
    </location>
</feature>
<feature type="domain" description="IQ 1" evidence="2">
    <location>
        <begin position="843"/>
        <end position="872"/>
    </location>
</feature>
<feature type="domain" description="IQ 2" evidence="2">
    <location>
        <begin position="866"/>
        <end position="895"/>
    </location>
</feature>
<feature type="domain" description="IQ 3" evidence="2">
    <location>
        <begin position="940"/>
        <end position="969"/>
    </location>
</feature>
<feature type="domain" description="Dilute" evidence="3">
    <location>
        <begin position="1427"/>
        <end position="1695"/>
    </location>
</feature>
<feature type="region of interest" description="Actin-binding" evidence="4">
    <location>
        <begin position="690"/>
        <end position="712"/>
    </location>
</feature>
<feature type="region of interest" description="Disordered" evidence="6">
    <location>
        <begin position="1070"/>
        <end position="1176"/>
    </location>
</feature>
<feature type="region of interest" description="Disordered" evidence="6">
    <location>
        <begin position="1218"/>
        <end position="1282"/>
    </location>
</feature>
<feature type="region of interest" description="Disordered" evidence="6">
    <location>
        <begin position="1312"/>
        <end position="1343"/>
    </location>
</feature>
<feature type="coiled-coil region" evidence="1">
    <location>
        <begin position="1180"/>
        <end position="1224"/>
    </location>
</feature>
<feature type="compositionally biased region" description="Polar residues" evidence="6">
    <location>
        <begin position="1077"/>
        <end position="1111"/>
    </location>
</feature>
<feature type="compositionally biased region" description="Low complexity" evidence="6">
    <location>
        <begin position="1112"/>
        <end position="1139"/>
    </location>
</feature>
<feature type="compositionally biased region" description="Basic and acidic residues" evidence="6">
    <location>
        <begin position="1143"/>
        <end position="1153"/>
    </location>
</feature>
<feature type="compositionally biased region" description="Low complexity" evidence="6">
    <location>
        <begin position="1253"/>
        <end position="1281"/>
    </location>
</feature>
<feature type="binding site" evidence="1">
    <location>
        <begin position="154"/>
        <end position="161"/>
    </location>
    <ligand>
        <name>ATP</name>
        <dbReference type="ChEBI" id="CHEBI:30616"/>
    </ligand>
</feature>
<comment type="function">
    <text>Myosin is a protein that binds to actin and has ATPase activity that is activated by actin.</text>
</comment>
<comment type="subunit">
    <text>Myosin I heavy chain is single-headed. Dimer of a heavy and a light chain. Inability to self-assemble into filaments.</text>
</comment>
<comment type="similarity">
    <text evidence="7">Belongs to the TRAFAC class myosin-kinesin ATPase superfamily. Myosin family.</text>
</comment>
<organism>
    <name type="scientific">Dictyostelium discoideum</name>
    <name type="common">Social amoeba</name>
    <dbReference type="NCBI Taxonomy" id="44689"/>
    <lineage>
        <taxon>Eukaryota</taxon>
        <taxon>Amoebozoa</taxon>
        <taxon>Evosea</taxon>
        <taxon>Eumycetozoa</taxon>
        <taxon>Dictyostelia</taxon>
        <taxon>Dictyosteliales</taxon>
        <taxon>Dictyosteliaceae</taxon>
        <taxon>Dictyostelium</taxon>
    </lineage>
</organism>
<accession>P54696</accession>
<accession>B0G166</accession>
<accession>Q54HG3</accession>